<sequence length="617" mass="65580">MWTAWCVAALSVAAVCGIRQDTTTVLRVTKDVLGDAISGTIQKSDAFRSALREVPVGVGGVPYNDFHVREPPPKYTNGRQLGGNYKYGHIEANDNTAQLGGKYRYGEILDSDGSLRDLRHEDYRPSDSAYHRGPGRYRSAADPSSAGRLHRRELRPGEIPAGVATGALGPGGLLGTGGILANEGILAGQGGLLGGGGLLGDGGLLGGGGVLGVLGEGGILSTVQGITGLRIVELTLPRVSVRLLPGVGVYLSLYTRVAINGKSLIGFLDIAVEVNITAKVRLTMDRTGYPRLVIERCDTLLGGIKVKLLRGLLPNLVDNLVNRVLANVLPDLLCPIVDVVLGLVNDQLGLVDSLVPLGILGSVQYTFSSLPLVTGEFLELDLNTLVGEAGGDLIDYPLGRPAMLPRPQMPELPPMGDNTNSQLAISANFLSSVLTMLQKQGALDIDITDGMFEDLPPLTTSTLGALIPKVFQQYPESRPLTIRIQVPNPPTVTLQKDKALVKVFATSEVVVSQPNDVETTICLIDVDTDLLASFSVEGDKLMIDAKLDKTSLNLRTSNVGNFDVFILEMLVEKIFDLAFMPAMNAILGSGVPLPKILNIDFSNADIDVLEDLLVLST</sequence>
<organism>
    <name type="scientific">Rattus norvegicus</name>
    <name type="common">Rat</name>
    <dbReference type="NCBI Taxonomy" id="10116"/>
    <lineage>
        <taxon>Eukaryota</taxon>
        <taxon>Metazoa</taxon>
        <taxon>Chordata</taxon>
        <taxon>Craniata</taxon>
        <taxon>Vertebrata</taxon>
        <taxon>Euteleostomi</taxon>
        <taxon>Mammalia</taxon>
        <taxon>Eutheria</taxon>
        <taxon>Euarchontoglires</taxon>
        <taxon>Glires</taxon>
        <taxon>Rodentia</taxon>
        <taxon>Myomorpha</taxon>
        <taxon>Muroidea</taxon>
        <taxon>Muridae</taxon>
        <taxon>Murinae</taxon>
        <taxon>Rattus</taxon>
    </lineage>
</organism>
<protein>
    <recommendedName>
        <fullName>BPI fold-containing family B member 4</fullName>
    </recommendedName>
    <alternativeName>
        <fullName>Ligand-binding protein RY2G5</fullName>
    </alternativeName>
    <alternativeName>
        <fullName>Long palate, lung and nasal epithelium carcinoma-associated protein 4</fullName>
    </alternativeName>
</protein>
<accession>Q05704</accession>
<dbReference type="EMBL" id="AABR03024115">
    <property type="status" value="NOT_ANNOTATED_CDS"/>
    <property type="molecule type" value="Genomic_DNA"/>
</dbReference>
<dbReference type="EMBL" id="X60660">
    <property type="protein sequence ID" value="CAA43067.1"/>
    <property type="molecule type" value="mRNA"/>
</dbReference>
<dbReference type="RefSeq" id="NP_001102679.2">
    <property type="nucleotide sequence ID" value="NM_001109209.2"/>
</dbReference>
<dbReference type="RefSeq" id="XP_063140458.1">
    <property type="nucleotide sequence ID" value="XM_063284388.1"/>
</dbReference>
<dbReference type="SMR" id="Q05704"/>
<dbReference type="FunCoup" id="Q05704">
    <property type="interactions" value="25"/>
</dbReference>
<dbReference type="STRING" id="10116.ENSRNOP00000047586"/>
<dbReference type="GlyCosmos" id="Q05704">
    <property type="glycosylation" value="1 site, No reported glycans"/>
</dbReference>
<dbReference type="GlyGen" id="Q05704">
    <property type="glycosylation" value="1 site"/>
</dbReference>
<dbReference type="PhosphoSitePlus" id="Q05704"/>
<dbReference type="PaxDb" id="10116-ENSRNOP00000047586"/>
<dbReference type="GeneID" id="499925"/>
<dbReference type="KEGG" id="rno:499925"/>
<dbReference type="UCSC" id="RGD:1561174">
    <property type="organism name" value="rat"/>
</dbReference>
<dbReference type="AGR" id="RGD:1561174"/>
<dbReference type="CTD" id="149954"/>
<dbReference type="RGD" id="1561174">
    <property type="gene designation" value="Bpifb4"/>
</dbReference>
<dbReference type="VEuPathDB" id="HostDB:ENSRNOG00000034174"/>
<dbReference type="eggNOG" id="KOG4160">
    <property type="taxonomic scope" value="Eukaryota"/>
</dbReference>
<dbReference type="HOGENOM" id="CLU_031635_0_0_1"/>
<dbReference type="InParanoid" id="Q05704"/>
<dbReference type="OrthoDB" id="71459at9989"/>
<dbReference type="PhylomeDB" id="Q05704"/>
<dbReference type="TreeFam" id="TF315617"/>
<dbReference type="Reactome" id="R-RNO-6803157">
    <property type="pathway name" value="Antimicrobial peptides"/>
</dbReference>
<dbReference type="PRO" id="PR:Q05704"/>
<dbReference type="Proteomes" id="UP000002494">
    <property type="component" value="Chromosome 3"/>
</dbReference>
<dbReference type="Bgee" id="ENSRNOG00000034174">
    <property type="expression patterns" value="Expressed in cerebellum and 2 other cell types or tissues"/>
</dbReference>
<dbReference type="GO" id="GO:0005737">
    <property type="term" value="C:cytoplasm"/>
    <property type="evidence" value="ECO:0007669"/>
    <property type="project" value="UniProtKB-SubCell"/>
</dbReference>
<dbReference type="GO" id="GO:0005576">
    <property type="term" value="C:extracellular region"/>
    <property type="evidence" value="ECO:0007669"/>
    <property type="project" value="UniProtKB-SubCell"/>
</dbReference>
<dbReference type="GO" id="GO:0008289">
    <property type="term" value="F:lipid binding"/>
    <property type="evidence" value="ECO:0007669"/>
    <property type="project" value="InterPro"/>
</dbReference>
<dbReference type="Gene3D" id="3.15.10.10">
    <property type="entry name" value="Bactericidal permeability-increasing protein, domain 1"/>
    <property type="match status" value="1"/>
</dbReference>
<dbReference type="Gene3D" id="3.15.20.10">
    <property type="entry name" value="Bactericidal permeability-increasing protein, domain 2"/>
    <property type="match status" value="1"/>
</dbReference>
<dbReference type="InterPro" id="IPR017943">
    <property type="entry name" value="Bactericidal_perm-incr_a/b_dom"/>
</dbReference>
<dbReference type="InterPro" id="IPR051660">
    <property type="entry name" value="BPI_fold-BPI/LBP"/>
</dbReference>
<dbReference type="InterPro" id="IPR001124">
    <property type="entry name" value="Lipid-bd_serum_glycop_C"/>
</dbReference>
<dbReference type="InterPro" id="IPR017942">
    <property type="entry name" value="Lipid-bd_serum_glycop_N"/>
</dbReference>
<dbReference type="PANTHER" id="PTHR46019:SF4">
    <property type="entry name" value="BPI FOLD-CONTAINING FAMILY B MEMBER 4"/>
    <property type="match status" value="1"/>
</dbReference>
<dbReference type="PANTHER" id="PTHR46019">
    <property type="entry name" value="BPI FOLD-CONTAINING FAMILY B MEMBER 4-RELATED"/>
    <property type="match status" value="1"/>
</dbReference>
<dbReference type="Pfam" id="PF01273">
    <property type="entry name" value="LBP_BPI_CETP"/>
    <property type="match status" value="1"/>
</dbReference>
<dbReference type="Pfam" id="PF02886">
    <property type="entry name" value="LBP_BPI_CETP_C"/>
    <property type="match status" value="1"/>
</dbReference>
<dbReference type="SMART" id="SM00328">
    <property type="entry name" value="BPI1"/>
    <property type="match status" value="1"/>
</dbReference>
<dbReference type="SMART" id="SM00329">
    <property type="entry name" value="BPI2"/>
    <property type="match status" value="1"/>
</dbReference>
<dbReference type="SUPFAM" id="SSF55394">
    <property type="entry name" value="Bactericidal permeability-increasing protein, BPI"/>
    <property type="match status" value="2"/>
</dbReference>
<reference key="1">
    <citation type="journal article" date="2004" name="Nature">
        <title>Genome sequence of the Brown Norway rat yields insights into mammalian evolution.</title>
        <authorList>
            <person name="Gibbs R.A."/>
            <person name="Weinstock G.M."/>
            <person name="Metzker M.L."/>
            <person name="Muzny D.M."/>
            <person name="Sodergren E.J."/>
            <person name="Scherer S."/>
            <person name="Scott G."/>
            <person name="Steffen D."/>
            <person name="Worley K.C."/>
            <person name="Burch P.E."/>
            <person name="Okwuonu G."/>
            <person name="Hines S."/>
            <person name="Lewis L."/>
            <person name="Deramo C."/>
            <person name="Delgado O."/>
            <person name="Dugan-Rocha S."/>
            <person name="Miner G."/>
            <person name="Morgan M."/>
            <person name="Hawes A."/>
            <person name="Gill R."/>
            <person name="Holt R.A."/>
            <person name="Adams M.D."/>
            <person name="Amanatides P.G."/>
            <person name="Baden-Tillson H."/>
            <person name="Barnstead M."/>
            <person name="Chin S."/>
            <person name="Evans C.A."/>
            <person name="Ferriera S."/>
            <person name="Fosler C."/>
            <person name="Glodek A."/>
            <person name="Gu Z."/>
            <person name="Jennings D."/>
            <person name="Kraft C.L."/>
            <person name="Nguyen T."/>
            <person name="Pfannkoch C.M."/>
            <person name="Sitter C."/>
            <person name="Sutton G.G."/>
            <person name="Venter J.C."/>
            <person name="Woodage T."/>
            <person name="Smith D."/>
            <person name="Lee H.-M."/>
            <person name="Gustafson E."/>
            <person name="Cahill P."/>
            <person name="Kana A."/>
            <person name="Doucette-Stamm L."/>
            <person name="Weinstock K."/>
            <person name="Fechtel K."/>
            <person name="Weiss R.B."/>
            <person name="Dunn D.M."/>
            <person name="Green E.D."/>
            <person name="Blakesley R.W."/>
            <person name="Bouffard G.G."/>
            <person name="De Jong P.J."/>
            <person name="Osoegawa K."/>
            <person name="Zhu B."/>
            <person name="Marra M."/>
            <person name="Schein J."/>
            <person name="Bosdet I."/>
            <person name="Fjell C."/>
            <person name="Jones S."/>
            <person name="Krzywinski M."/>
            <person name="Mathewson C."/>
            <person name="Siddiqui A."/>
            <person name="Wye N."/>
            <person name="McPherson J."/>
            <person name="Zhao S."/>
            <person name="Fraser C.M."/>
            <person name="Shetty J."/>
            <person name="Shatsman S."/>
            <person name="Geer K."/>
            <person name="Chen Y."/>
            <person name="Abramzon S."/>
            <person name="Nierman W.C."/>
            <person name="Havlak P.H."/>
            <person name="Chen R."/>
            <person name="Durbin K.J."/>
            <person name="Egan A."/>
            <person name="Ren Y."/>
            <person name="Song X.-Z."/>
            <person name="Li B."/>
            <person name="Liu Y."/>
            <person name="Qin X."/>
            <person name="Cawley S."/>
            <person name="Cooney A.J."/>
            <person name="D'Souza L.M."/>
            <person name="Martin K."/>
            <person name="Wu J.Q."/>
            <person name="Gonzalez-Garay M.L."/>
            <person name="Jackson A.R."/>
            <person name="Kalafus K.J."/>
            <person name="McLeod M.P."/>
            <person name="Milosavljevic A."/>
            <person name="Virk D."/>
            <person name="Volkov A."/>
            <person name="Wheeler D.A."/>
            <person name="Zhang Z."/>
            <person name="Bailey J.A."/>
            <person name="Eichler E.E."/>
            <person name="Tuzun E."/>
            <person name="Birney E."/>
            <person name="Mongin E."/>
            <person name="Ureta-Vidal A."/>
            <person name="Woodwark C."/>
            <person name="Zdobnov E."/>
            <person name="Bork P."/>
            <person name="Suyama M."/>
            <person name="Torrents D."/>
            <person name="Alexandersson M."/>
            <person name="Trask B.J."/>
            <person name="Young J.M."/>
            <person name="Huang H."/>
            <person name="Wang H."/>
            <person name="Xing H."/>
            <person name="Daniels S."/>
            <person name="Gietzen D."/>
            <person name="Schmidt J."/>
            <person name="Stevens K."/>
            <person name="Vitt U."/>
            <person name="Wingrove J."/>
            <person name="Camara F."/>
            <person name="Mar Alba M."/>
            <person name="Abril J.F."/>
            <person name="Guigo R."/>
            <person name="Smit A."/>
            <person name="Dubchak I."/>
            <person name="Rubin E.M."/>
            <person name="Couronne O."/>
            <person name="Poliakov A."/>
            <person name="Huebner N."/>
            <person name="Ganten D."/>
            <person name="Goesele C."/>
            <person name="Hummel O."/>
            <person name="Kreitler T."/>
            <person name="Lee Y.-A."/>
            <person name="Monti J."/>
            <person name="Schulz H."/>
            <person name="Zimdahl H."/>
            <person name="Himmelbauer H."/>
            <person name="Lehrach H."/>
            <person name="Jacob H.J."/>
            <person name="Bromberg S."/>
            <person name="Gullings-Handley J."/>
            <person name="Jensen-Seaman M.I."/>
            <person name="Kwitek A.E."/>
            <person name="Lazar J."/>
            <person name="Pasko D."/>
            <person name="Tonellato P.J."/>
            <person name="Twigger S."/>
            <person name="Ponting C.P."/>
            <person name="Duarte J.M."/>
            <person name="Rice S."/>
            <person name="Goodstadt L."/>
            <person name="Beatson S.A."/>
            <person name="Emes R.D."/>
            <person name="Winter E.E."/>
            <person name="Webber C."/>
            <person name="Brandt P."/>
            <person name="Nyakatura G."/>
            <person name="Adetobi M."/>
            <person name="Chiaromonte F."/>
            <person name="Elnitski L."/>
            <person name="Eswara P."/>
            <person name="Hardison R.C."/>
            <person name="Hou M."/>
            <person name="Kolbe D."/>
            <person name="Makova K."/>
            <person name="Miller W."/>
            <person name="Nekrutenko A."/>
            <person name="Riemer C."/>
            <person name="Schwartz S."/>
            <person name="Taylor J."/>
            <person name="Yang S."/>
            <person name="Zhang Y."/>
            <person name="Lindpaintner K."/>
            <person name="Andrews T.D."/>
            <person name="Caccamo M."/>
            <person name="Clamp M."/>
            <person name="Clarke L."/>
            <person name="Curwen V."/>
            <person name="Durbin R.M."/>
            <person name="Eyras E."/>
            <person name="Searle S.M."/>
            <person name="Cooper G.M."/>
            <person name="Batzoglou S."/>
            <person name="Brudno M."/>
            <person name="Sidow A."/>
            <person name="Stone E.A."/>
            <person name="Payseur B.A."/>
            <person name="Bourque G."/>
            <person name="Lopez-Otin C."/>
            <person name="Puente X.S."/>
            <person name="Chakrabarti K."/>
            <person name="Chatterji S."/>
            <person name="Dewey C."/>
            <person name="Pachter L."/>
            <person name="Bray N."/>
            <person name="Yap V.B."/>
            <person name="Caspi A."/>
            <person name="Tesler G."/>
            <person name="Pevzner P.A."/>
            <person name="Haussler D."/>
            <person name="Roskin K.M."/>
            <person name="Baertsch R."/>
            <person name="Clawson H."/>
            <person name="Furey T.S."/>
            <person name="Hinrichs A.S."/>
            <person name="Karolchik D."/>
            <person name="Kent W.J."/>
            <person name="Rosenbloom K.R."/>
            <person name="Trumbower H."/>
            <person name="Weirauch M."/>
            <person name="Cooper D.N."/>
            <person name="Stenson P.D."/>
            <person name="Ma B."/>
            <person name="Brent M."/>
            <person name="Arumugam M."/>
            <person name="Shteynberg D."/>
            <person name="Copley R.R."/>
            <person name="Taylor M.S."/>
            <person name="Riethman H."/>
            <person name="Mudunuri U."/>
            <person name="Peterson J."/>
            <person name="Guyer M."/>
            <person name="Felsenfeld A."/>
            <person name="Old S."/>
            <person name="Mockrin S."/>
            <person name="Collins F.S."/>
        </authorList>
    </citation>
    <scope>NUCLEOTIDE SEQUENCE [LARGE SCALE GENOMIC DNA]</scope>
    <source>
        <strain>Brown Norway</strain>
    </source>
</reference>
<reference key="2">
    <citation type="journal article" date="1991" name="EMBO J.">
        <title>Novel genes for potential ligand-binding proteins in subregions of the olfactory mucosa.</title>
        <authorList>
            <person name="Dear T.N."/>
            <person name="Boehm T."/>
            <person name="Keverne E.B."/>
            <person name="Rabbitts T.H."/>
        </authorList>
    </citation>
    <scope>NUCLEOTIDE SEQUENCE [MRNA] OF 148-617</scope>
    <source>
        <strain>Fischer</strain>
        <tissue>Olfactory epithelium</tissue>
    </source>
</reference>
<keyword id="KW-0963">Cytoplasm</keyword>
<keyword id="KW-1015">Disulfide bond</keyword>
<keyword id="KW-0325">Glycoprotein</keyword>
<keyword id="KW-1185">Reference proteome</keyword>
<keyword id="KW-0964">Secreted</keyword>
<keyword id="KW-0732">Signal</keyword>
<name>BPIB4_RAT</name>
<feature type="signal peptide" evidence="2">
    <location>
        <begin position="1"/>
        <end position="17"/>
    </location>
</feature>
<feature type="chain" id="PRO_0000089160" description="BPI fold-containing family B member 4">
    <location>
        <begin position="18"/>
        <end position="617"/>
    </location>
</feature>
<feature type="region of interest" description="Disordered" evidence="3">
    <location>
        <begin position="124"/>
        <end position="149"/>
    </location>
</feature>
<feature type="glycosylation site" description="N-linked (GlcNAc...) asparagine" evidence="2">
    <location>
        <position position="275"/>
    </location>
</feature>
<feature type="disulfide bond" evidence="1">
    <location>
        <begin position="297"/>
        <end position="334"/>
    </location>
</feature>
<evidence type="ECO:0000250" key="1"/>
<evidence type="ECO:0000255" key="2"/>
<evidence type="ECO:0000256" key="3">
    <source>
        <dbReference type="SAM" id="MobiDB-lite"/>
    </source>
</evidence>
<evidence type="ECO:0000305" key="4"/>
<gene>
    <name type="primary">Bpifb4</name>
    <name type="synonym">Lplunc4</name>
    <name type="synonym">Ry2g5</name>
</gene>
<comment type="function">
    <text evidence="1">May have the capacity to recognize and bind specific classes of odorants. May act as a carrier molecule, transporting odorants across the mucus layer to access receptor sites. May serve as a primary defense mechanism by recognizing and removing potentially harmful odorants or pathogenic microorganisms from the mucosa or clearing excess odorant from mucus to enable new odorant stimuli to be received (By similarity).</text>
</comment>
<comment type="subcellular location">
    <subcellularLocation>
        <location evidence="1">Secreted</location>
    </subcellularLocation>
    <subcellularLocation>
        <location evidence="1">Cytoplasm</location>
    </subcellularLocation>
</comment>
<comment type="tissue specificity">
    <text>Highly expressed in olfactory mucosa but undetectable in thymus, kidney, lung, brain, spleen and liver.</text>
</comment>
<comment type="similarity">
    <text evidence="4">Belongs to the BPI/LBP/Plunc superfamily. BPI/LBP family.</text>
</comment>
<proteinExistence type="evidence at transcript level"/>